<reference key="1">
    <citation type="journal article" date="1998" name="Nature">
        <title>The genome sequence of Rickettsia prowazekii and the origin of mitochondria.</title>
        <authorList>
            <person name="Andersson S.G.E."/>
            <person name="Zomorodipour A."/>
            <person name="Andersson J.O."/>
            <person name="Sicheritz-Ponten T."/>
            <person name="Alsmark U.C.M."/>
            <person name="Podowski R.M."/>
            <person name="Naeslund A.K."/>
            <person name="Eriksson A.-S."/>
            <person name="Winkler H.H."/>
            <person name="Kurland C.G."/>
        </authorList>
    </citation>
    <scope>NUCLEOTIDE SEQUENCE [LARGE SCALE GENOMIC DNA]</scope>
    <source>
        <strain>Madrid E</strain>
    </source>
</reference>
<proteinExistence type="inferred from homology"/>
<comment type="function">
    <text evidence="1">Converts heme B (protoheme IX) to heme O by substitution of the vinyl group on carbon 2 of heme B porphyrin ring with a hydroxyethyl farnesyl side group.</text>
</comment>
<comment type="catalytic activity">
    <reaction evidence="1">
        <text>heme b + (2E,6E)-farnesyl diphosphate + H2O = Fe(II)-heme o + diphosphate</text>
        <dbReference type="Rhea" id="RHEA:28070"/>
        <dbReference type="ChEBI" id="CHEBI:15377"/>
        <dbReference type="ChEBI" id="CHEBI:33019"/>
        <dbReference type="ChEBI" id="CHEBI:60344"/>
        <dbReference type="ChEBI" id="CHEBI:60530"/>
        <dbReference type="ChEBI" id="CHEBI:175763"/>
        <dbReference type="EC" id="2.5.1.141"/>
    </reaction>
</comment>
<comment type="pathway">
    <text evidence="1">Porphyrin-containing compound metabolism; heme O biosynthesis; heme O from protoheme: step 1/1.</text>
</comment>
<comment type="subcellular location">
    <subcellularLocation>
        <location evidence="1">Cell inner membrane</location>
        <topology evidence="1">Multi-pass membrane protein</topology>
    </subcellularLocation>
</comment>
<comment type="miscellaneous">
    <text evidence="1">Carbon 2 of the heme B porphyrin ring is defined according to the Fischer nomenclature.</text>
</comment>
<comment type="similarity">
    <text evidence="1">Belongs to the UbiA prenyltransferase family. Protoheme IX farnesyltransferase subfamily.</text>
</comment>
<feature type="chain" id="PRO_0000162911" description="Protoheme IX farnesyltransferase">
    <location>
        <begin position="1"/>
        <end position="310"/>
    </location>
</feature>
<feature type="transmembrane region" description="Helical" evidence="1">
    <location>
        <begin position="31"/>
        <end position="51"/>
    </location>
</feature>
<feature type="transmembrane region" description="Helical" evidence="1">
    <location>
        <begin position="52"/>
        <end position="72"/>
    </location>
</feature>
<feature type="transmembrane region" description="Helical" evidence="1">
    <location>
        <begin position="102"/>
        <end position="119"/>
    </location>
</feature>
<feature type="transmembrane region" description="Helical" evidence="1">
    <location>
        <begin position="123"/>
        <end position="145"/>
    </location>
</feature>
<feature type="transmembrane region" description="Helical" evidence="1">
    <location>
        <begin position="151"/>
        <end position="171"/>
    </location>
</feature>
<feature type="transmembrane region" description="Helical" evidence="1">
    <location>
        <begin position="179"/>
        <end position="199"/>
    </location>
</feature>
<feature type="transmembrane region" description="Helical" evidence="1">
    <location>
        <begin position="225"/>
        <end position="245"/>
    </location>
</feature>
<feature type="transmembrane region" description="Helical" evidence="1">
    <location>
        <begin position="248"/>
        <end position="268"/>
    </location>
</feature>
<feature type="transmembrane region" description="Helical" evidence="1">
    <location>
        <begin position="281"/>
        <end position="301"/>
    </location>
</feature>
<accession>Q9ZDI2</accession>
<gene>
    <name evidence="1" type="primary">ctaB</name>
    <name type="ordered locus">RP346</name>
</gene>
<name>COXX_RICPR</name>
<organism>
    <name type="scientific">Rickettsia prowazekii (strain Madrid E)</name>
    <dbReference type="NCBI Taxonomy" id="272947"/>
    <lineage>
        <taxon>Bacteria</taxon>
        <taxon>Pseudomonadati</taxon>
        <taxon>Pseudomonadota</taxon>
        <taxon>Alphaproteobacteria</taxon>
        <taxon>Rickettsiales</taxon>
        <taxon>Rickettsiaceae</taxon>
        <taxon>Rickettsieae</taxon>
        <taxon>Rickettsia</taxon>
        <taxon>typhus group</taxon>
    </lineage>
</organism>
<sequence length="310" mass="35087">MSSLVTQINFNKINNSQSTVKDYILLMKPRVMSLVIFTGFVGMWLAPDSIHPLIAGIAVICIALGAGSAGAMNMWYDRDIDILMKRTQNRPIVRGVIEPDEALSFGLITGFFAVFFMALCVNILASFLLLFTIFYYICIYTIWLKRRSIQNIVIGGVSGALPPVIGHAAVSNTISLESIILFLIIFIWTPPHSWAIALFCNDDYKHCKIPMMPVVKGTLYTKKQILIYSIILFIVSLMPFFIGMNNDIYLIIVCIIGLVFLYYAFSLFYDTPDNKQAKRFFTYSIFYLCFIFILLSSTSTIHSLRDIIFG</sequence>
<evidence type="ECO:0000255" key="1">
    <source>
        <dbReference type="HAMAP-Rule" id="MF_00154"/>
    </source>
</evidence>
<protein>
    <recommendedName>
        <fullName evidence="1">Protoheme IX farnesyltransferase</fullName>
        <ecNumber evidence="1">2.5.1.141</ecNumber>
    </recommendedName>
    <alternativeName>
        <fullName evidence="1">Heme B farnesyltransferase</fullName>
    </alternativeName>
    <alternativeName>
        <fullName evidence="1">Heme O synthase</fullName>
    </alternativeName>
</protein>
<keyword id="KW-0997">Cell inner membrane</keyword>
<keyword id="KW-1003">Cell membrane</keyword>
<keyword id="KW-0350">Heme biosynthesis</keyword>
<keyword id="KW-0472">Membrane</keyword>
<keyword id="KW-1185">Reference proteome</keyword>
<keyword id="KW-0808">Transferase</keyword>
<keyword id="KW-0812">Transmembrane</keyword>
<keyword id="KW-1133">Transmembrane helix</keyword>
<dbReference type="EC" id="2.5.1.141" evidence="1"/>
<dbReference type="EMBL" id="AJ235271">
    <property type="protein sequence ID" value="CAA14806.1"/>
    <property type="molecule type" value="Genomic_DNA"/>
</dbReference>
<dbReference type="PIR" id="D71691">
    <property type="entry name" value="D71691"/>
</dbReference>
<dbReference type="RefSeq" id="NP_220729.1">
    <property type="nucleotide sequence ID" value="NC_000963.1"/>
</dbReference>
<dbReference type="SMR" id="Q9ZDI2"/>
<dbReference type="STRING" id="272947.gene:17555426"/>
<dbReference type="EnsemblBacteria" id="CAA14806">
    <property type="protein sequence ID" value="CAA14806"/>
    <property type="gene ID" value="CAA14806"/>
</dbReference>
<dbReference type="KEGG" id="rpr:RP346"/>
<dbReference type="PATRIC" id="fig|272947.5.peg.356"/>
<dbReference type="eggNOG" id="COG0109">
    <property type="taxonomic scope" value="Bacteria"/>
</dbReference>
<dbReference type="HOGENOM" id="CLU_029631_0_2_5"/>
<dbReference type="OrthoDB" id="9814417at2"/>
<dbReference type="UniPathway" id="UPA00834">
    <property type="reaction ID" value="UER00712"/>
</dbReference>
<dbReference type="Proteomes" id="UP000002480">
    <property type="component" value="Chromosome"/>
</dbReference>
<dbReference type="GO" id="GO:0005886">
    <property type="term" value="C:plasma membrane"/>
    <property type="evidence" value="ECO:0007669"/>
    <property type="project" value="UniProtKB-SubCell"/>
</dbReference>
<dbReference type="GO" id="GO:0008495">
    <property type="term" value="F:protoheme IX farnesyltransferase activity"/>
    <property type="evidence" value="ECO:0007669"/>
    <property type="project" value="UniProtKB-UniRule"/>
</dbReference>
<dbReference type="GO" id="GO:0048034">
    <property type="term" value="P:heme O biosynthetic process"/>
    <property type="evidence" value="ECO:0007669"/>
    <property type="project" value="UniProtKB-UniRule"/>
</dbReference>
<dbReference type="CDD" id="cd13957">
    <property type="entry name" value="PT_UbiA_Cox10"/>
    <property type="match status" value="1"/>
</dbReference>
<dbReference type="Gene3D" id="1.10.357.140">
    <property type="entry name" value="UbiA prenyltransferase"/>
    <property type="match status" value="1"/>
</dbReference>
<dbReference type="HAMAP" id="MF_00154">
    <property type="entry name" value="CyoE_CtaB"/>
    <property type="match status" value="1"/>
</dbReference>
<dbReference type="InterPro" id="IPR006369">
    <property type="entry name" value="Protohaem_IX_farnesylTrfase"/>
</dbReference>
<dbReference type="InterPro" id="IPR000537">
    <property type="entry name" value="UbiA_prenyltransferase"/>
</dbReference>
<dbReference type="InterPro" id="IPR030470">
    <property type="entry name" value="UbiA_prenylTrfase_CS"/>
</dbReference>
<dbReference type="InterPro" id="IPR044878">
    <property type="entry name" value="UbiA_sf"/>
</dbReference>
<dbReference type="NCBIfam" id="TIGR01473">
    <property type="entry name" value="cyoE_ctaB"/>
    <property type="match status" value="1"/>
</dbReference>
<dbReference type="NCBIfam" id="NF003349">
    <property type="entry name" value="PRK04375.1-2"/>
    <property type="match status" value="1"/>
</dbReference>
<dbReference type="PANTHER" id="PTHR43448:SF7">
    <property type="entry name" value="4-HYDROXYBENZOATE SOLANESYLTRANSFERASE"/>
    <property type="match status" value="1"/>
</dbReference>
<dbReference type="PANTHER" id="PTHR43448">
    <property type="entry name" value="PROTOHEME IX FARNESYLTRANSFERASE, MITOCHONDRIAL"/>
    <property type="match status" value="1"/>
</dbReference>
<dbReference type="Pfam" id="PF01040">
    <property type="entry name" value="UbiA"/>
    <property type="match status" value="1"/>
</dbReference>
<dbReference type="PROSITE" id="PS00943">
    <property type="entry name" value="UBIA"/>
    <property type="match status" value="1"/>
</dbReference>